<keyword id="KW-1185">Reference proteome</keyword>
<keyword id="KW-0732">Signal</keyword>
<proteinExistence type="inferred from homology"/>
<reference key="1">
    <citation type="journal article" date="2003" name="Proc. Natl. Acad. Sci. U.S.A.">
        <title>The complete genome sequence of Mycobacterium bovis.</title>
        <authorList>
            <person name="Garnier T."/>
            <person name="Eiglmeier K."/>
            <person name="Camus J.-C."/>
            <person name="Medina N."/>
            <person name="Mansoor H."/>
            <person name="Pryor M."/>
            <person name="Duthoy S."/>
            <person name="Grondin S."/>
            <person name="Lacroix C."/>
            <person name="Monsempe C."/>
            <person name="Simon S."/>
            <person name="Harris B."/>
            <person name="Atkin R."/>
            <person name="Doggett J."/>
            <person name="Mayes R."/>
            <person name="Keating L."/>
            <person name="Wheeler P.R."/>
            <person name="Parkhill J."/>
            <person name="Barrell B.G."/>
            <person name="Cole S.T."/>
            <person name="Gordon S.V."/>
            <person name="Hewinson R.G."/>
        </authorList>
    </citation>
    <scope>NUCLEOTIDE SEQUENCE [LARGE SCALE GENOMIC DNA]</scope>
    <source>
        <strain>ATCC BAA-935 / AF2122/97</strain>
    </source>
</reference>
<reference key="2">
    <citation type="journal article" date="2017" name="Genome Announc.">
        <title>Updated reference genome sequence and annotation of Mycobacterium bovis AF2122/97.</title>
        <authorList>
            <person name="Malone K.M."/>
            <person name="Farrell D."/>
            <person name="Stuber T.P."/>
            <person name="Schubert O.T."/>
            <person name="Aebersold R."/>
            <person name="Robbe-Austerman S."/>
            <person name="Gordon S.V."/>
        </authorList>
    </citation>
    <scope>NUCLEOTIDE SEQUENCE [LARGE SCALE GENOMIC DNA]</scope>
    <scope>GENOME REANNOTATION</scope>
    <source>
        <strain>ATCC BAA-935 / AF2122/97</strain>
    </source>
</reference>
<evidence type="ECO:0000255" key="1"/>
<evidence type="ECO:0000256" key="2">
    <source>
        <dbReference type="SAM" id="MobiDB-lite"/>
    </source>
</evidence>
<evidence type="ECO:0000305" key="3"/>
<accession>P64698</accession>
<accession>A0A1R3XXM1</accession>
<accession>Q11144</accession>
<accession>X2BF58</accession>
<gene>
    <name type="ordered locus">BQ2027_MB0487</name>
</gene>
<protein>
    <recommendedName>
        <fullName>Uncharacterized protein Mb0487</fullName>
    </recommendedName>
</protein>
<feature type="signal peptide" evidence="1">
    <location>
        <begin position="1"/>
        <end position="23"/>
    </location>
</feature>
<feature type="chain" id="PRO_0000014075" description="Uncharacterized protein Mb0487">
    <location>
        <begin position="24"/>
        <end position="148"/>
    </location>
</feature>
<feature type="region of interest" description="Disordered" evidence="2">
    <location>
        <begin position="22"/>
        <end position="45"/>
    </location>
</feature>
<organism>
    <name type="scientific">Mycobacterium bovis (strain ATCC BAA-935 / AF2122/97)</name>
    <dbReference type="NCBI Taxonomy" id="233413"/>
    <lineage>
        <taxon>Bacteria</taxon>
        <taxon>Bacillati</taxon>
        <taxon>Actinomycetota</taxon>
        <taxon>Actinomycetes</taxon>
        <taxon>Mycobacteriales</taxon>
        <taxon>Mycobacteriaceae</taxon>
        <taxon>Mycobacterium</taxon>
        <taxon>Mycobacterium tuberculosis complex</taxon>
    </lineage>
</organism>
<sequence>MKALVAVSAVAVVALLGVSSAQADPEADPGAGEANYGGPPSSPRLVDHTEWAQWGSLPSLRVYPSQVGRTASRRLGMAAADAAWAEVLALSPEADTAGMRAQFICHWQYAEIRQPGKPSWNLEPWRPVVDDSEMLASGCNPGSPEESF</sequence>
<name>Y487_MYCBO</name>
<dbReference type="EMBL" id="LT708304">
    <property type="protein sequence ID" value="SIT99082.1"/>
    <property type="molecule type" value="Genomic_DNA"/>
</dbReference>
<dbReference type="RefSeq" id="NP_854150.1">
    <property type="nucleotide sequence ID" value="NC_002945.3"/>
</dbReference>
<dbReference type="RefSeq" id="WP_003402344.1">
    <property type="nucleotide sequence ID" value="NC_002945.4"/>
</dbReference>
<dbReference type="PATRIC" id="fig|233413.5.peg.529"/>
<dbReference type="Proteomes" id="UP000001419">
    <property type="component" value="Chromosome"/>
</dbReference>
<dbReference type="InterPro" id="IPR019719">
    <property type="entry name" value="DUF2599"/>
</dbReference>
<dbReference type="Pfam" id="PF10783">
    <property type="entry name" value="DUF2599"/>
    <property type="match status" value="1"/>
</dbReference>
<comment type="similarity">
    <text evidence="3">To M.leprae ML2452.</text>
</comment>